<sequence length="84" mass="9566">MNDHKLVFWVRSLRVTVNLFWSTVSSPSSMRNTTMRDKSNVSVRILLSNLLFQSTHFTDLLIDESRISFVTIDSNTGGIIASIF</sequence>
<evidence type="ECO:0000305" key="1"/>
<evidence type="ECO:0000312" key="2">
    <source>
        <dbReference type="SGD" id="S000303811"/>
    </source>
</evidence>
<dbReference type="EMBL" id="BK006944">
    <property type="protein sequence ID" value="DAD54808.1"/>
    <property type="molecule type" value="Genomic_DNA"/>
</dbReference>
<dbReference type="RefSeq" id="NP_001381967.1">
    <property type="nucleotide sequence ID" value="NM_001395037.1"/>
</dbReference>
<dbReference type="GeneID" id="65052911"/>
<dbReference type="SGD" id="S000303811">
    <property type="gene designation" value="YKL104W-A"/>
</dbReference>
<dbReference type="InParanoid" id="A0A8D9UGU6"/>
<dbReference type="PRO" id="PR:A0A8D9UGU6"/>
<dbReference type="Proteomes" id="UP000002311">
    <property type="component" value="Chromosome XI"/>
</dbReference>
<dbReference type="Pfam" id="PF23478">
    <property type="entry name" value="YKL104W-A"/>
    <property type="match status" value="1"/>
</dbReference>
<organism>
    <name type="scientific">Saccharomyces cerevisiae (strain ATCC 204508 / S288c)</name>
    <name type="common">Baker's yeast</name>
    <dbReference type="NCBI Taxonomy" id="559292"/>
    <lineage>
        <taxon>Eukaryota</taxon>
        <taxon>Fungi</taxon>
        <taxon>Dikarya</taxon>
        <taxon>Ascomycota</taxon>
        <taxon>Saccharomycotina</taxon>
        <taxon>Saccharomycetes</taxon>
        <taxon>Saccharomycetales</taxon>
        <taxon>Saccharomycetaceae</taxon>
        <taxon>Saccharomyces</taxon>
    </lineage>
</organism>
<keyword id="KW-1185">Reference proteome</keyword>
<accession>A0A8D9UGU6</accession>
<protein>
    <recommendedName>
        <fullName evidence="1">Uncharacterized protein YKL104W-A</fullName>
    </recommendedName>
</protein>
<gene>
    <name evidence="2" type="ordered locus">YKL104W-A</name>
</gene>
<name>YK14A_YEAST</name>
<feature type="chain" id="PRO_0000455988" description="Uncharacterized protein YKL104W-A">
    <location>
        <begin position="1"/>
        <end position="84"/>
    </location>
</feature>
<proteinExistence type="evidence at protein level"/>
<reference key="1">
    <citation type="journal article" date="1994" name="Nature">
        <title>Complete DNA sequence of yeast chromosome XI.</title>
        <authorList>
            <person name="Dujon B."/>
            <person name="Alexandraki D."/>
            <person name="Andre B."/>
            <person name="Ansorge W."/>
            <person name="Baladron V."/>
            <person name="Ballesta J.P.G."/>
            <person name="Banrevi A."/>
            <person name="Bolle P.-A."/>
            <person name="Bolotin-Fukuhara M."/>
            <person name="Bossier P."/>
            <person name="Bou G."/>
            <person name="Boyer J."/>
            <person name="Buitrago M.J."/>
            <person name="Cheret G."/>
            <person name="Colleaux L."/>
            <person name="Daignan-Fornier B."/>
            <person name="del Rey F."/>
            <person name="Dion C."/>
            <person name="Domdey H."/>
            <person name="Duesterhoeft A."/>
            <person name="Duesterhus S."/>
            <person name="Entian K.-D."/>
            <person name="Erfle H."/>
            <person name="Esteban P.F."/>
            <person name="Feldmann H."/>
            <person name="Fernandes L."/>
            <person name="Fobo G.M."/>
            <person name="Fritz C."/>
            <person name="Fukuhara H."/>
            <person name="Gabel C."/>
            <person name="Gaillon L."/>
            <person name="Garcia-Cantalejo J.M."/>
            <person name="Garcia-Ramirez J.J."/>
            <person name="Gent M.E."/>
            <person name="Ghazvini M."/>
            <person name="Goffeau A."/>
            <person name="Gonzalez A."/>
            <person name="Grothues D."/>
            <person name="Guerreiro P."/>
            <person name="Hegemann J.H."/>
            <person name="Hewitt N."/>
            <person name="Hilger F."/>
            <person name="Hollenberg C.P."/>
            <person name="Horaitis O."/>
            <person name="Indge K.J."/>
            <person name="Jacquier A."/>
            <person name="James C.M."/>
            <person name="Jauniaux J.-C."/>
            <person name="Jimenez A."/>
            <person name="Keuchel H."/>
            <person name="Kirchrath L."/>
            <person name="Kleine K."/>
            <person name="Koetter P."/>
            <person name="Legrain P."/>
            <person name="Liebl S."/>
            <person name="Louis E.J."/>
            <person name="Maia e Silva A."/>
            <person name="Marck C."/>
            <person name="Monnier A.-L."/>
            <person name="Moestl D."/>
            <person name="Mueller S."/>
            <person name="Obermaier B."/>
            <person name="Oliver S.G."/>
            <person name="Pallier C."/>
            <person name="Pascolo S."/>
            <person name="Pfeiffer F."/>
            <person name="Philippsen P."/>
            <person name="Planta R.J."/>
            <person name="Pohl F.M."/>
            <person name="Pohl T.M."/>
            <person name="Poehlmann R."/>
            <person name="Portetelle D."/>
            <person name="Purnelle B."/>
            <person name="Puzos V."/>
            <person name="Ramezani Rad M."/>
            <person name="Rasmussen S.W."/>
            <person name="Remacha M.A."/>
            <person name="Revuelta J.L."/>
            <person name="Richard G.-F."/>
            <person name="Rieger M."/>
            <person name="Rodrigues-Pousada C."/>
            <person name="Rose M."/>
            <person name="Rupp T."/>
            <person name="Santos M.A."/>
            <person name="Schwager C."/>
            <person name="Sensen C."/>
            <person name="Skala J."/>
            <person name="Soares H."/>
            <person name="Sor F."/>
            <person name="Stegemann J."/>
            <person name="Tettelin H."/>
            <person name="Thierry A."/>
            <person name="Tzermia M."/>
            <person name="Urrestarazu L.A."/>
            <person name="van Dyck L."/>
            <person name="van Vliet-Reedijk J.C."/>
            <person name="Valens M."/>
            <person name="Vandenbol M."/>
            <person name="Vilela C."/>
            <person name="Vissers S."/>
            <person name="von Wettstein D."/>
            <person name="Voss H."/>
            <person name="Wiemann S."/>
            <person name="Xu G."/>
            <person name="Zimmermann J."/>
            <person name="Haasemann M."/>
            <person name="Becker I."/>
            <person name="Mewes H.-W."/>
        </authorList>
    </citation>
    <scope>NUCLEOTIDE SEQUENCE [LARGE SCALE GENOMIC DNA]</scope>
    <source>
        <strain>ATCC 204508 / S288c</strain>
    </source>
</reference>
<reference key="2">
    <citation type="journal article" date="2014" name="G3 (Bethesda)">
        <title>The reference genome sequence of Saccharomyces cerevisiae: Then and now.</title>
        <authorList>
            <person name="Engel S.R."/>
            <person name="Dietrich F.S."/>
            <person name="Fisk D.G."/>
            <person name="Binkley G."/>
            <person name="Balakrishnan R."/>
            <person name="Costanzo M.C."/>
            <person name="Dwight S.S."/>
            <person name="Hitz B.C."/>
            <person name="Karra K."/>
            <person name="Nash R.S."/>
            <person name="Weng S."/>
            <person name="Wong E.D."/>
            <person name="Lloyd P."/>
            <person name="Skrzypek M.S."/>
            <person name="Miyasato S.R."/>
            <person name="Simison M."/>
            <person name="Cherry J.M."/>
        </authorList>
    </citation>
    <scope>GENOME REANNOTATION</scope>
    <source>
        <strain>ATCC 204508 / S288c</strain>
    </source>
</reference>
<reference key="3">
    <citation type="journal article" date="2018" name="J. Proteome Res.">
        <title>Enrichment-based proteogenomics identifies microproteins, missing proteins, and novel smORFs in Saccharomyces cerevisiae.</title>
        <authorList>
            <person name="He C."/>
            <person name="Jia C."/>
            <person name="Zhang Y."/>
            <person name="Xu P."/>
        </authorList>
    </citation>
    <scope>IDENTIFICATION BY MASS SPECTROMETRY</scope>
</reference>